<reference key="1">
    <citation type="submission" date="1995-05" db="EMBL/GenBank/DDBJ databases">
        <authorList>
            <person name="Fauconnier A."/>
            <person name="Allaoui A."/>
            <person name="van Elsen A."/>
            <person name="Cornelis G."/>
            <person name="Bollen A."/>
        </authorList>
    </citation>
    <scope>NUCLEOTIDE SEQUENCE [GENOMIC DNA]</scope>
    <source>
        <strain>W1024 / Serotype O:9</strain>
    </source>
</reference>
<dbReference type="EMBL" id="Z48169">
    <property type="protein sequence ID" value="CAA88194.1"/>
    <property type="molecule type" value="Genomic_DNA"/>
</dbReference>
<dbReference type="PIR" id="S54221">
    <property type="entry name" value="S54221"/>
</dbReference>
<dbReference type="SMR" id="Q56895"/>
<dbReference type="STRING" id="1443113.LC20_02158"/>
<dbReference type="eggNOG" id="COG1843">
    <property type="taxonomic scope" value="Bacteria"/>
</dbReference>
<dbReference type="GO" id="GO:0044781">
    <property type="term" value="P:bacterial-type flagellum organization"/>
    <property type="evidence" value="ECO:0007669"/>
    <property type="project" value="UniProtKB-KW"/>
</dbReference>
<dbReference type="InterPro" id="IPR005648">
    <property type="entry name" value="FlgD"/>
</dbReference>
<dbReference type="Pfam" id="PF03963">
    <property type="entry name" value="FlgD"/>
    <property type="match status" value="1"/>
</dbReference>
<accession>Q56895</accession>
<proteinExistence type="inferred from homology"/>
<feature type="chain" id="PRO_0000180815" description="Basal-body rod modification protein FlgD">
    <location>
        <begin position="1"/>
        <end position="47" status="greater than"/>
    </location>
</feature>
<feature type="region of interest" description="Disordered" evidence="1">
    <location>
        <begin position="1"/>
        <end position="30"/>
    </location>
</feature>
<feature type="compositionally biased region" description="Polar residues" evidence="1">
    <location>
        <begin position="1"/>
        <end position="15"/>
    </location>
</feature>
<feature type="compositionally biased region" description="Low complexity" evidence="1">
    <location>
        <begin position="16"/>
        <end position="28"/>
    </location>
</feature>
<feature type="non-terminal residue">
    <location>
        <position position="47"/>
    </location>
</feature>
<protein>
    <recommendedName>
        <fullName>Basal-body rod modification protein FlgD</fullName>
    </recommendedName>
</protein>
<comment type="function">
    <text>Required for flagellar hook formation. May act as a scaffolding protein.</text>
</comment>
<comment type="similarity">
    <text evidence="2">Belongs to the FlgD family.</text>
</comment>
<gene>
    <name type="primary">flgD</name>
</gene>
<evidence type="ECO:0000256" key="1">
    <source>
        <dbReference type="SAM" id="MobiDB-lite"/>
    </source>
</evidence>
<evidence type="ECO:0000305" key="2"/>
<keyword id="KW-1005">Bacterial flagellum biogenesis</keyword>
<sequence length="47" mass="4927">MAITNSLTDSDYGINSTTGTSSTTGSSSQDLQNSFLTLLVAQLKNQD</sequence>
<name>FLGD_YEREN</name>
<organism>
    <name type="scientific">Yersinia enterocolitica</name>
    <dbReference type="NCBI Taxonomy" id="630"/>
    <lineage>
        <taxon>Bacteria</taxon>
        <taxon>Pseudomonadati</taxon>
        <taxon>Pseudomonadota</taxon>
        <taxon>Gammaproteobacteria</taxon>
        <taxon>Enterobacterales</taxon>
        <taxon>Yersiniaceae</taxon>
        <taxon>Yersinia</taxon>
    </lineage>
</organism>